<feature type="chain" id="PRO_0000159570" description="8-oxoguanine DNA glycosylase/AP lyase">
    <location>
        <begin position="1"/>
        <end position="226"/>
    </location>
</feature>
<feature type="active site" evidence="1">
    <location>
        <position position="149"/>
    </location>
</feature>
<feature type="active site" evidence="1">
    <location>
        <position position="167"/>
    </location>
</feature>
<feature type="site" description="Important for guanine/8-oxoguanine distinction" evidence="1">
    <location>
        <position position="226"/>
    </location>
</feature>
<name>OGG1_AQUAE</name>
<gene>
    <name evidence="1" type="primary">ogg</name>
    <name type="ordered locus">aq_251</name>
</gene>
<dbReference type="EC" id="3.2.2.-" evidence="1"/>
<dbReference type="EC" id="4.2.99.18" evidence="1"/>
<dbReference type="EMBL" id="AE000657">
    <property type="protein sequence ID" value="AAC06576.1"/>
    <property type="molecule type" value="Genomic_DNA"/>
</dbReference>
<dbReference type="PIR" id="H70322">
    <property type="entry name" value="H70322"/>
</dbReference>
<dbReference type="RefSeq" id="NP_213172.1">
    <property type="nucleotide sequence ID" value="NC_000918.1"/>
</dbReference>
<dbReference type="RefSeq" id="WP_010880110.1">
    <property type="nucleotide sequence ID" value="NC_000918.1"/>
</dbReference>
<dbReference type="SMR" id="O66612"/>
<dbReference type="STRING" id="224324.aq_251"/>
<dbReference type="EnsemblBacteria" id="AAC06576">
    <property type="protein sequence ID" value="AAC06576"/>
    <property type="gene ID" value="aq_251"/>
</dbReference>
<dbReference type="KEGG" id="aae:aq_251"/>
<dbReference type="eggNOG" id="COG1059">
    <property type="taxonomic scope" value="Bacteria"/>
</dbReference>
<dbReference type="HOGENOM" id="CLU_104937_0_0_0"/>
<dbReference type="InParanoid" id="O66612"/>
<dbReference type="OrthoDB" id="12078at2"/>
<dbReference type="Proteomes" id="UP000000798">
    <property type="component" value="Chromosome"/>
</dbReference>
<dbReference type="GO" id="GO:0140078">
    <property type="term" value="F:class I DNA-(apurinic or apyrimidinic site) endonuclease activity"/>
    <property type="evidence" value="ECO:0007669"/>
    <property type="project" value="UniProtKB-EC"/>
</dbReference>
<dbReference type="GO" id="GO:0016799">
    <property type="term" value="F:hydrolase activity, hydrolyzing N-glycosyl compounds"/>
    <property type="evidence" value="ECO:0007669"/>
    <property type="project" value="UniProtKB-UniRule"/>
</dbReference>
<dbReference type="GO" id="GO:0006284">
    <property type="term" value="P:base-excision repair"/>
    <property type="evidence" value="ECO:0007669"/>
    <property type="project" value="UniProtKB-UniRule"/>
</dbReference>
<dbReference type="CDD" id="cd00056">
    <property type="entry name" value="ENDO3c"/>
    <property type="match status" value="1"/>
</dbReference>
<dbReference type="Gene3D" id="1.10.1670.10">
    <property type="entry name" value="Helix-hairpin-Helix base-excision DNA repair enzymes (C-terminal)"/>
    <property type="match status" value="1"/>
</dbReference>
<dbReference type="Gene3D" id="1.10.340.30">
    <property type="entry name" value="Hypothetical protein, domain 2"/>
    <property type="match status" value="1"/>
</dbReference>
<dbReference type="HAMAP" id="MF_00241">
    <property type="entry name" value="Ogg"/>
    <property type="match status" value="1"/>
</dbReference>
<dbReference type="InterPro" id="IPR012092">
    <property type="entry name" value="DNA_glyclase/AP_lyase_Ogg"/>
</dbReference>
<dbReference type="InterPro" id="IPR011257">
    <property type="entry name" value="DNA_glycosylase"/>
</dbReference>
<dbReference type="InterPro" id="IPR003265">
    <property type="entry name" value="HhH-GPD_domain"/>
</dbReference>
<dbReference type="InterPro" id="IPR023170">
    <property type="entry name" value="HhH_base_excis_C"/>
</dbReference>
<dbReference type="NCBIfam" id="NF002305">
    <property type="entry name" value="PRK01229.1"/>
    <property type="match status" value="1"/>
</dbReference>
<dbReference type="Pfam" id="PF22175">
    <property type="entry name" value="Ogg-HhH"/>
    <property type="match status" value="1"/>
</dbReference>
<dbReference type="PIRSF" id="PIRSF005954">
    <property type="entry name" value="Thrmst_ogg"/>
    <property type="match status" value="1"/>
</dbReference>
<dbReference type="SMART" id="SM00478">
    <property type="entry name" value="ENDO3c"/>
    <property type="match status" value="1"/>
</dbReference>
<dbReference type="SUPFAM" id="SSF48150">
    <property type="entry name" value="DNA-glycosylase"/>
    <property type="match status" value="1"/>
</dbReference>
<sequence>MDAIQEVKRIIPEVQKYVNQRMEEFERLGREGWTHFDFRPFLDIDYDAGLFSELSFCILTANSSATLGIKIQAHLGEEGFLNKTKEELEEVFRKFGHRYAGQRAERIVEAREKFPKVKSLIEKEKNSKVIRELLADPKSPYKIKGFGYKEASHFLRNIGFKDLAIIDRHISRFLMEKGLLRQVKSITPKVYLEAEKALESLAKELGLSLGELDLYIFYIKTKKVLK</sequence>
<comment type="function">
    <text evidence="1">Catalyzes the excision of an oxidatively damaged form of guanine (7,8-dihydro-8-oxoguanine = 8-oxoG) from DNA. Also cleaves the DNA backbone at apurinic/apyrimidinic sites (AP sites).</text>
</comment>
<comment type="catalytic activity">
    <reaction evidence="1">
        <text>2'-deoxyribonucleotide-(2'-deoxyribose 5'-phosphate)-2'-deoxyribonucleotide-DNA = a 3'-end 2'-deoxyribonucleotide-(2,3-dehydro-2,3-deoxyribose 5'-phosphate)-DNA + a 5'-end 5'-phospho-2'-deoxyribonucleoside-DNA + H(+)</text>
        <dbReference type="Rhea" id="RHEA:66592"/>
        <dbReference type="Rhea" id="RHEA-COMP:13180"/>
        <dbReference type="Rhea" id="RHEA-COMP:16897"/>
        <dbReference type="Rhea" id="RHEA-COMP:17067"/>
        <dbReference type="ChEBI" id="CHEBI:15378"/>
        <dbReference type="ChEBI" id="CHEBI:136412"/>
        <dbReference type="ChEBI" id="CHEBI:157695"/>
        <dbReference type="ChEBI" id="CHEBI:167181"/>
        <dbReference type="EC" id="4.2.99.18"/>
    </reaction>
</comment>
<comment type="similarity">
    <text evidence="1 2">Belongs to the type-2 OGG1 family.</text>
</comment>
<protein>
    <recommendedName>
        <fullName evidence="1">8-oxoguanine DNA glycosylase/AP lyase</fullName>
    </recommendedName>
    <domain>
        <recommendedName>
            <fullName evidence="1">8-oxoguanine DNA glycosylase</fullName>
            <shortName evidence="1">8-oxoG DNA glycosylase</shortName>
            <ecNumber evidence="1">3.2.2.-</ecNumber>
        </recommendedName>
    </domain>
    <domain>
        <recommendedName>
            <fullName evidence="1">DNA-(apurinic or apyrimidinic site) lyase</fullName>
            <shortName evidence="1">AP lyase</shortName>
            <ecNumber evidence="1">4.2.99.18</ecNumber>
        </recommendedName>
    </domain>
</protein>
<organism>
    <name type="scientific">Aquifex aeolicus (strain VF5)</name>
    <dbReference type="NCBI Taxonomy" id="224324"/>
    <lineage>
        <taxon>Bacteria</taxon>
        <taxon>Pseudomonadati</taxon>
        <taxon>Aquificota</taxon>
        <taxon>Aquificia</taxon>
        <taxon>Aquificales</taxon>
        <taxon>Aquificaceae</taxon>
        <taxon>Aquifex</taxon>
    </lineage>
</organism>
<accession>O66612</accession>
<keyword id="KW-0227">DNA damage</keyword>
<keyword id="KW-0234">DNA repair</keyword>
<keyword id="KW-0326">Glycosidase</keyword>
<keyword id="KW-0378">Hydrolase</keyword>
<keyword id="KW-0456">Lyase</keyword>
<keyword id="KW-0511">Multifunctional enzyme</keyword>
<keyword id="KW-1185">Reference proteome</keyword>
<evidence type="ECO:0000255" key="1">
    <source>
        <dbReference type="HAMAP-Rule" id="MF_00241"/>
    </source>
</evidence>
<evidence type="ECO:0000305" key="2"/>
<reference key="1">
    <citation type="journal article" date="1998" name="Nature">
        <title>The complete genome of the hyperthermophilic bacterium Aquifex aeolicus.</title>
        <authorList>
            <person name="Deckert G."/>
            <person name="Warren P.V."/>
            <person name="Gaasterland T."/>
            <person name="Young W.G."/>
            <person name="Lenox A.L."/>
            <person name="Graham D.E."/>
            <person name="Overbeek R."/>
            <person name="Snead M.A."/>
            <person name="Keller M."/>
            <person name="Aujay M."/>
            <person name="Huber R."/>
            <person name="Feldman R.A."/>
            <person name="Short J.M."/>
            <person name="Olsen G.J."/>
            <person name="Swanson R.V."/>
        </authorList>
    </citation>
    <scope>NUCLEOTIDE SEQUENCE [LARGE SCALE GENOMIC DNA]</scope>
    <source>
        <strain>VF5</strain>
    </source>
</reference>
<proteinExistence type="inferred from homology"/>